<accession>Q7SA06</accession>
<organism>
    <name type="scientific">Neurospora crassa (strain ATCC 24698 / 74-OR23-1A / CBS 708.71 / DSM 1257 / FGSC 987)</name>
    <dbReference type="NCBI Taxonomy" id="367110"/>
    <lineage>
        <taxon>Eukaryota</taxon>
        <taxon>Fungi</taxon>
        <taxon>Dikarya</taxon>
        <taxon>Ascomycota</taxon>
        <taxon>Pezizomycotina</taxon>
        <taxon>Sordariomycetes</taxon>
        <taxon>Sordariomycetidae</taxon>
        <taxon>Sordariales</taxon>
        <taxon>Sordariaceae</taxon>
        <taxon>Neurospora</taxon>
    </lineage>
</organism>
<sequence>MSAALRFWLRGQSAASNQSSKAPSAAPSPAASSTSLRDQFNKHGRSSTGSVSAAQQEASNIEDAMAAVALIMNDDIDGAEAMLRAREDASTFHQLGVGVSTFLRSILGFEKDIMNEATTRLGETETRAWNDMKKAQKEAEKHGVYGGSVYPQGHPSGGSHIYPPGSEFALVNAEAQLMGAVVAVMHESLTEGIKGFYKLRKAYATLDGIMASELLYLQTLEKKGIITNASSTKTSLDKMPGAFSDSEFATLENTKGANTPSQNGAAADSASVAKDPSGPQTPASASASNEAKTAADVDILDEKLGHLQLDADAASEQNVLPDASLEDTTPSTPQFSHLDQLNKFGADRSLFKSPVDIFVHSGASMCFGILLLIISMVPPAFSRLLSVIGFKGDRDRGVQMLWQSTKYDNVNGAMAGLVLLQYYNLFFGIADILPSELDIQQLSKPSTGGAKFEAVGYPHNECTALLAQMRHRYPDSRLWRLEEARVLANARRIEEALAMLADNNDSKMRQIAALNSFELSMNSIYALDFKAAPVHFLRCVELNSWSHALYYYLAACAELELYRDLFHSGEATSPAALKHKKLAEEYFRKAPTVAGKKRFMAKAMPFEVFVLRKLQKWEERVKAYGLDLADVICVSPAMEMIYLWNGSKRMPPHLLEKARTYLPWERCTAPADKDVVAKIKKLEQDEVAIGLLAESSFLRQLGKSVEARKLVEPLLGVDKSVFKGPTRDDYCGAAAHYEVAAVAWMEACSPEAWPSAPEEVESFRKQKTDECQLHLDKVSKWDGFVLDARFGMRVQAGIDSVKWLKSKKGWM</sequence>
<keyword id="KW-0963">Cytoplasm</keyword>
<keyword id="KW-0539">Nucleus</keyword>
<keyword id="KW-0597">Phosphoprotein</keyword>
<keyword id="KW-1185">Reference proteome</keyword>
<proteinExistence type="inferred from homology"/>
<reference key="1">
    <citation type="journal article" date="2003" name="Nature">
        <title>The genome sequence of the filamentous fungus Neurospora crassa.</title>
        <authorList>
            <person name="Galagan J.E."/>
            <person name="Calvo S.E."/>
            <person name="Borkovich K.A."/>
            <person name="Selker E.U."/>
            <person name="Read N.D."/>
            <person name="Jaffe D.B."/>
            <person name="FitzHugh W."/>
            <person name="Ma L.-J."/>
            <person name="Smirnov S."/>
            <person name="Purcell S."/>
            <person name="Rehman B."/>
            <person name="Elkins T."/>
            <person name="Engels R."/>
            <person name="Wang S."/>
            <person name="Nielsen C.B."/>
            <person name="Butler J."/>
            <person name="Endrizzi M."/>
            <person name="Qui D."/>
            <person name="Ianakiev P."/>
            <person name="Bell-Pedersen D."/>
            <person name="Nelson M.A."/>
            <person name="Werner-Washburne M."/>
            <person name="Selitrennikoff C.P."/>
            <person name="Kinsey J.A."/>
            <person name="Braun E.L."/>
            <person name="Zelter A."/>
            <person name="Schulte U."/>
            <person name="Kothe G.O."/>
            <person name="Jedd G."/>
            <person name="Mewes H.-W."/>
            <person name="Staben C."/>
            <person name="Marcotte E."/>
            <person name="Greenberg D."/>
            <person name="Roy A."/>
            <person name="Foley K."/>
            <person name="Naylor J."/>
            <person name="Stange-Thomann N."/>
            <person name="Barrett R."/>
            <person name="Gnerre S."/>
            <person name="Kamal M."/>
            <person name="Kamvysselis M."/>
            <person name="Mauceli E.W."/>
            <person name="Bielke C."/>
            <person name="Rudd S."/>
            <person name="Frishman D."/>
            <person name="Krystofova S."/>
            <person name="Rasmussen C."/>
            <person name="Metzenberg R.L."/>
            <person name="Perkins D.D."/>
            <person name="Kroken S."/>
            <person name="Cogoni C."/>
            <person name="Macino G."/>
            <person name="Catcheside D.E.A."/>
            <person name="Li W."/>
            <person name="Pratt R.J."/>
            <person name="Osmani S.A."/>
            <person name="DeSouza C.P.C."/>
            <person name="Glass N.L."/>
            <person name="Orbach M.J."/>
            <person name="Berglund J.A."/>
            <person name="Voelker R."/>
            <person name="Yarden O."/>
            <person name="Plamann M."/>
            <person name="Seiler S."/>
            <person name="Dunlap J.C."/>
            <person name="Radford A."/>
            <person name="Aramayo R."/>
            <person name="Natvig D.O."/>
            <person name="Alex L.A."/>
            <person name="Mannhaupt G."/>
            <person name="Ebbole D.J."/>
            <person name="Freitag M."/>
            <person name="Paulsen I."/>
            <person name="Sachs M.S."/>
            <person name="Lander E.S."/>
            <person name="Nusbaum C."/>
            <person name="Birren B.W."/>
        </authorList>
    </citation>
    <scope>NUCLEOTIDE SEQUENCE [LARGE SCALE GENOMIC DNA]</scope>
    <source>
        <strain>ATCC 24698 / 74-OR23-1A / CBS 708.71 / DSM 1257 / FGSC 987</strain>
    </source>
</reference>
<comment type="function">
    <text evidence="1">Inclusion body (IB) resident protein that interacts strongly with lipid droplet (LD) proteins. Involved in LD-mediated IB clearing after protein folding stress, probably by enabling access to the IBs of an LD-stored soluble sterol derivative that acts as a chaperone in inclusion clearing.</text>
</comment>
<comment type="subunit">
    <text evidence="1">Interacts with lipid droplet proteins.</text>
</comment>
<comment type="subcellular location">
    <subcellularLocation>
        <location evidence="1">Cytoplasm</location>
    </subcellularLocation>
    <subcellularLocation>
        <location evidence="1">Nucleus</location>
    </subcellularLocation>
    <text evidence="1">Localized exclusively in cytoplasmic inclusion bodies under protein folding stress conditions.</text>
</comment>
<comment type="similarity">
    <text evidence="3">Belongs to the IML2 family.</text>
</comment>
<protein>
    <recommendedName>
        <fullName>Inclusion body clearance protein iml2</fullName>
    </recommendedName>
</protein>
<feature type="chain" id="PRO_0000333353" description="Inclusion body clearance protein iml2">
    <location>
        <begin position="1"/>
        <end position="811"/>
    </location>
</feature>
<feature type="region of interest" description="Disordered" evidence="2">
    <location>
        <begin position="14"/>
        <end position="54"/>
    </location>
</feature>
<feature type="region of interest" description="Disordered" evidence="2">
    <location>
        <begin position="253"/>
        <end position="292"/>
    </location>
</feature>
<feature type="compositionally biased region" description="Low complexity" evidence="2">
    <location>
        <begin position="14"/>
        <end position="35"/>
    </location>
</feature>
<feature type="compositionally biased region" description="Polar residues" evidence="2">
    <location>
        <begin position="253"/>
        <end position="264"/>
    </location>
</feature>
<feature type="compositionally biased region" description="Polar residues" evidence="2">
    <location>
        <begin position="278"/>
        <end position="291"/>
    </location>
</feature>
<evidence type="ECO:0000250" key="1">
    <source>
        <dbReference type="UniProtKB" id="P47031"/>
    </source>
</evidence>
<evidence type="ECO:0000256" key="2">
    <source>
        <dbReference type="SAM" id="MobiDB-lite"/>
    </source>
</evidence>
<evidence type="ECO:0000305" key="3"/>
<gene>
    <name type="primary">iml2</name>
    <name type="ORF">NCU07911</name>
</gene>
<name>IML2_NEUCR</name>
<dbReference type="EMBL" id="CM002239">
    <property type="protein sequence ID" value="EAA33191.1"/>
    <property type="molecule type" value="Genomic_DNA"/>
</dbReference>
<dbReference type="RefSeq" id="XP_962427.1">
    <property type="nucleotide sequence ID" value="XM_957334.2"/>
</dbReference>
<dbReference type="FunCoup" id="Q7SA06">
    <property type="interactions" value="119"/>
</dbReference>
<dbReference type="PaxDb" id="5141-EFNCRP00000008191"/>
<dbReference type="EnsemblFungi" id="EAA33191">
    <property type="protein sequence ID" value="EAA33191"/>
    <property type="gene ID" value="NCU07911"/>
</dbReference>
<dbReference type="GeneID" id="3878599"/>
<dbReference type="KEGG" id="ncr:NCU07911"/>
<dbReference type="VEuPathDB" id="FungiDB:NCU07911"/>
<dbReference type="HOGENOM" id="CLU_014926_1_0_1"/>
<dbReference type="InParanoid" id="Q7SA06"/>
<dbReference type="OMA" id="WNGYNRM"/>
<dbReference type="OrthoDB" id="2154985at2759"/>
<dbReference type="Proteomes" id="UP000001805">
    <property type="component" value="Chromosome 4, Linkage Group IV"/>
</dbReference>
<dbReference type="GO" id="GO:0005737">
    <property type="term" value="C:cytoplasm"/>
    <property type="evidence" value="ECO:0007669"/>
    <property type="project" value="UniProtKB-SubCell"/>
</dbReference>
<dbReference type="GO" id="GO:0005634">
    <property type="term" value="C:nucleus"/>
    <property type="evidence" value="ECO:0007669"/>
    <property type="project" value="UniProtKB-SubCell"/>
</dbReference>
<dbReference type="InterPro" id="IPR019412">
    <property type="entry name" value="Iml2/TPR_39"/>
</dbReference>
<dbReference type="PANTHER" id="PTHR31859">
    <property type="entry name" value="TETRATRICOPEPTIDE REPEAT PROTEIN 39 FAMILY MEMBER"/>
    <property type="match status" value="1"/>
</dbReference>
<dbReference type="PANTHER" id="PTHR31859:SF1">
    <property type="entry name" value="TETRATRICOPEPTIDE REPEAT PROTEIN 39C"/>
    <property type="match status" value="1"/>
</dbReference>
<dbReference type="Pfam" id="PF10300">
    <property type="entry name" value="Iml2-TPR_39"/>
    <property type="match status" value="1"/>
</dbReference>